<organism>
    <name type="scientific">Bacillus subtilis (strain 168)</name>
    <dbReference type="NCBI Taxonomy" id="224308"/>
    <lineage>
        <taxon>Bacteria</taxon>
        <taxon>Bacillati</taxon>
        <taxon>Bacillota</taxon>
        <taxon>Bacilli</taxon>
        <taxon>Bacillales</taxon>
        <taxon>Bacillaceae</taxon>
        <taxon>Bacillus</taxon>
    </lineage>
</organism>
<dbReference type="EMBL" id="AJ222587">
    <property type="protein sequence ID" value="CAA10878.1"/>
    <property type="molecule type" value="Genomic_DNA"/>
</dbReference>
<dbReference type="EMBL" id="AL009126">
    <property type="protein sequence ID" value="CAB13289.1"/>
    <property type="molecule type" value="Genomic_DNA"/>
</dbReference>
<dbReference type="PIR" id="D69866">
    <property type="entry name" value="D69866"/>
</dbReference>
<dbReference type="RefSeq" id="NP_389299.1">
    <property type="nucleotide sequence ID" value="NC_000964.3"/>
</dbReference>
<dbReference type="RefSeq" id="WP_003232385.1">
    <property type="nucleotide sequence ID" value="NZ_OZ025638.1"/>
</dbReference>
<dbReference type="SMR" id="O34879"/>
<dbReference type="FunCoup" id="O34879">
    <property type="interactions" value="47"/>
</dbReference>
<dbReference type="STRING" id="224308.BSU14160"/>
<dbReference type="PaxDb" id="224308-BSU14160"/>
<dbReference type="EnsemblBacteria" id="CAB13289">
    <property type="protein sequence ID" value="CAB13289"/>
    <property type="gene ID" value="BSU_14160"/>
</dbReference>
<dbReference type="GeneID" id="939196"/>
<dbReference type="KEGG" id="bsu:BSU14160"/>
<dbReference type="PATRIC" id="fig|224308.179.peg.1545"/>
<dbReference type="eggNOG" id="ENOG5031G1Q">
    <property type="taxonomic scope" value="Bacteria"/>
</dbReference>
<dbReference type="InParanoid" id="O34879"/>
<dbReference type="OrthoDB" id="2917344at2"/>
<dbReference type="BioCyc" id="BSUB:BSU14160-MONOMER"/>
<dbReference type="Proteomes" id="UP000001570">
    <property type="component" value="Chromosome"/>
</dbReference>
<dbReference type="CDD" id="cd15482">
    <property type="entry name" value="Sialidase_non-viral"/>
    <property type="match status" value="1"/>
</dbReference>
<dbReference type="Gene3D" id="2.130.10.10">
    <property type="entry name" value="YVTN repeat-like/Quinoprotein amine dehydrogenase"/>
    <property type="match status" value="1"/>
</dbReference>
<dbReference type="InterPro" id="IPR015943">
    <property type="entry name" value="WD40/YVTN_repeat-like_dom_sf"/>
</dbReference>
<dbReference type="SUPFAM" id="SSF110296">
    <property type="entry name" value="Oligoxyloglucan reducing end-specific cellobiohydrolase"/>
    <property type="match status" value="1"/>
</dbReference>
<reference key="1">
    <citation type="submission" date="1997-11" db="EMBL/GenBank/DDBJ databases">
        <title>Sequence of the Bacillus subtilis chromosome from ykuA to cse-15.</title>
        <authorList>
            <person name="Scanlan E."/>
            <person name="Devine K.M."/>
        </authorList>
    </citation>
    <scope>NUCLEOTIDE SEQUENCE [GENOMIC DNA]</scope>
    <source>
        <strain>168</strain>
    </source>
</reference>
<reference key="2">
    <citation type="journal article" date="1997" name="Nature">
        <title>The complete genome sequence of the Gram-positive bacterium Bacillus subtilis.</title>
        <authorList>
            <person name="Kunst F."/>
            <person name="Ogasawara N."/>
            <person name="Moszer I."/>
            <person name="Albertini A.M."/>
            <person name="Alloni G."/>
            <person name="Azevedo V."/>
            <person name="Bertero M.G."/>
            <person name="Bessieres P."/>
            <person name="Bolotin A."/>
            <person name="Borchert S."/>
            <person name="Borriss R."/>
            <person name="Boursier L."/>
            <person name="Brans A."/>
            <person name="Braun M."/>
            <person name="Brignell S.C."/>
            <person name="Bron S."/>
            <person name="Brouillet S."/>
            <person name="Bruschi C.V."/>
            <person name="Caldwell B."/>
            <person name="Capuano V."/>
            <person name="Carter N.M."/>
            <person name="Choi S.-K."/>
            <person name="Codani J.-J."/>
            <person name="Connerton I.F."/>
            <person name="Cummings N.J."/>
            <person name="Daniel R.A."/>
            <person name="Denizot F."/>
            <person name="Devine K.M."/>
            <person name="Duesterhoeft A."/>
            <person name="Ehrlich S.D."/>
            <person name="Emmerson P.T."/>
            <person name="Entian K.-D."/>
            <person name="Errington J."/>
            <person name="Fabret C."/>
            <person name="Ferrari E."/>
            <person name="Foulger D."/>
            <person name="Fritz C."/>
            <person name="Fujita M."/>
            <person name="Fujita Y."/>
            <person name="Fuma S."/>
            <person name="Galizzi A."/>
            <person name="Galleron N."/>
            <person name="Ghim S.-Y."/>
            <person name="Glaser P."/>
            <person name="Goffeau A."/>
            <person name="Golightly E.J."/>
            <person name="Grandi G."/>
            <person name="Guiseppi G."/>
            <person name="Guy B.J."/>
            <person name="Haga K."/>
            <person name="Haiech J."/>
            <person name="Harwood C.R."/>
            <person name="Henaut A."/>
            <person name="Hilbert H."/>
            <person name="Holsappel S."/>
            <person name="Hosono S."/>
            <person name="Hullo M.-F."/>
            <person name="Itaya M."/>
            <person name="Jones L.-M."/>
            <person name="Joris B."/>
            <person name="Karamata D."/>
            <person name="Kasahara Y."/>
            <person name="Klaerr-Blanchard M."/>
            <person name="Klein C."/>
            <person name="Kobayashi Y."/>
            <person name="Koetter P."/>
            <person name="Koningstein G."/>
            <person name="Krogh S."/>
            <person name="Kumano M."/>
            <person name="Kurita K."/>
            <person name="Lapidus A."/>
            <person name="Lardinois S."/>
            <person name="Lauber J."/>
            <person name="Lazarevic V."/>
            <person name="Lee S.-M."/>
            <person name="Levine A."/>
            <person name="Liu H."/>
            <person name="Masuda S."/>
            <person name="Mauel C."/>
            <person name="Medigue C."/>
            <person name="Medina N."/>
            <person name="Mellado R.P."/>
            <person name="Mizuno M."/>
            <person name="Moestl D."/>
            <person name="Nakai S."/>
            <person name="Noback M."/>
            <person name="Noone D."/>
            <person name="O'Reilly M."/>
            <person name="Ogawa K."/>
            <person name="Ogiwara A."/>
            <person name="Oudega B."/>
            <person name="Park S.-H."/>
            <person name="Parro V."/>
            <person name="Pohl T.M."/>
            <person name="Portetelle D."/>
            <person name="Porwollik S."/>
            <person name="Prescott A.M."/>
            <person name="Presecan E."/>
            <person name="Pujic P."/>
            <person name="Purnelle B."/>
            <person name="Rapoport G."/>
            <person name="Rey M."/>
            <person name="Reynolds S."/>
            <person name="Rieger M."/>
            <person name="Rivolta C."/>
            <person name="Rocha E."/>
            <person name="Roche B."/>
            <person name="Rose M."/>
            <person name="Sadaie Y."/>
            <person name="Sato T."/>
            <person name="Scanlan E."/>
            <person name="Schleich S."/>
            <person name="Schroeter R."/>
            <person name="Scoffone F."/>
            <person name="Sekiguchi J."/>
            <person name="Sekowska A."/>
            <person name="Seror S.J."/>
            <person name="Serror P."/>
            <person name="Shin B.-S."/>
            <person name="Soldo B."/>
            <person name="Sorokin A."/>
            <person name="Tacconi E."/>
            <person name="Takagi T."/>
            <person name="Takahashi H."/>
            <person name="Takemaru K."/>
            <person name="Takeuchi M."/>
            <person name="Tamakoshi A."/>
            <person name="Tanaka T."/>
            <person name="Terpstra P."/>
            <person name="Tognoni A."/>
            <person name="Tosato V."/>
            <person name="Uchiyama S."/>
            <person name="Vandenbol M."/>
            <person name="Vannier F."/>
            <person name="Vassarotti A."/>
            <person name="Viari A."/>
            <person name="Wambutt R."/>
            <person name="Wedler E."/>
            <person name="Wedler H."/>
            <person name="Weitzenegger T."/>
            <person name="Winters P."/>
            <person name="Wipat A."/>
            <person name="Yamamoto H."/>
            <person name="Yamane K."/>
            <person name="Yasumoto K."/>
            <person name="Yata K."/>
            <person name="Yoshida K."/>
            <person name="Yoshikawa H.-F."/>
            <person name="Zumstein E."/>
            <person name="Yoshikawa H."/>
            <person name="Danchin A."/>
        </authorList>
    </citation>
    <scope>NUCLEOTIDE SEQUENCE [LARGE SCALE GENOMIC DNA]</scope>
    <source>
        <strain>168</strain>
    </source>
</reference>
<protein>
    <recommendedName>
        <fullName>Uncharacterized protein YkuO</fullName>
    </recommendedName>
</protein>
<sequence>MFHKGATAVTASAFSGYFVAVQREGIFHYSLEQGWRKLFRLKSKIHCISYIGPYLFGVGEKGTVIRSADEGKTWTMSSFPTNATVWAITGRNNGFVCAHGKHCIYVSDDFGVSWRVAKPFAEFHNPPVIRSLCLHGGNLFIGTQIHEYFGGIWAYDIKRDTVQVVKKEKNRMTASMLVFNENWLVAAMGSVKGKHGAVTVRNLLNGEEFTIQSSMIRNEESFLDLSEDDGIIYVTTTQDENGFSRIYQVDLEARSLKWFDTIKGHGWRVANQKENFFCAGLYECKFVQPYEVSAMIH</sequence>
<name>YKUO_BACSU</name>
<gene>
    <name type="primary">ykuO</name>
    <name type="ordered locus">BSU14160</name>
</gene>
<proteinExistence type="predicted"/>
<keyword id="KW-1185">Reference proteome</keyword>
<feature type="chain" id="PRO_0000375822" description="Uncharacterized protein YkuO">
    <location>
        <begin position="1"/>
        <end position="297"/>
    </location>
</feature>
<accession>O34879</accession>
<accession>Q796K2</accession>